<accession>Q6R2R2</accession>
<dbReference type="EMBL" id="AY518207">
    <property type="protein sequence ID" value="AAS66750.1"/>
    <property type="molecule type" value="Genomic_DNA"/>
</dbReference>
<dbReference type="RefSeq" id="NP_001009112.1">
    <property type="nucleotide sequence ID" value="NM_001009112.1"/>
</dbReference>
<dbReference type="SMR" id="Q6R2R2"/>
<dbReference type="STRING" id="9598.ENSPTRP00000054644"/>
<dbReference type="GlyCosmos" id="Q6R2R2">
    <property type="glycosylation" value="1 site, No reported glycans"/>
</dbReference>
<dbReference type="PaxDb" id="9598-ENSPTRP00000054644"/>
<dbReference type="GeneID" id="467956"/>
<dbReference type="KEGG" id="ptr:467956"/>
<dbReference type="CTD" id="244218"/>
<dbReference type="eggNOG" id="KOG1633">
    <property type="taxonomic scope" value="Eukaryota"/>
</dbReference>
<dbReference type="InParanoid" id="Q6R2R2"/>
<dbReference type="Proteomes" id="UP000002277">
    <property type="component" value="Unplaced"/>
</dbReference>
<dbReference type="GO" id="GO:0005576">
    <property type="term" value="C:extracellular region"/>
    <property type="evidence" value="ECO:0000318"/>
    <property type="project" value="GO_Central"/>
</dbReference>
<dbReference type="GO" id="GO:0005615">
    <property type="term" value="C:extracellular space"/>
    <property type="evidence" value="ECO:0007669"/>
    <property type="project" value="UniProtKB-KW"/>
</dbReference>
<dbReference type="GO" id="GO:0005125">
    <property type="term" value="F:cytokine activity"/>
    <property type="evidence" value="ECO:0000318"/>
    <property type="project" value="GO_Central"/>
</dbReference>
<dbReference type="GO" id="GO:0007259">
    <property type="term" value="P:cell surface receptor signaling pathway via JAK-STAT"/>
    <property type="evidence" value="ECO:0000318"/>
    <property type="project" value="GO_Central"/>
</dbReference>
<dbReference type="GO" id="GO:0007399">
    <property type="term" value="P:nervous system development"/>
    <property type="evidence" value="ECO:0000318"/>
    <property type="project" value="GO_Central"/>
</dbReference>
<dbReference type="FunFam" id="1.20.1250.10:FF:000023">
    <property type="entry name" value="Cardiotrophin-2"/>
    <property type="match status" value="1"/>
</dbReference>
<dbReference type="Gene3D" id="1.20.1250.10">
    <property type="match status" value="1"/>
</dbReference>
<dbReference type="InterPro" id="IPR009079">
    <property type="entry name" value="4_helix_cytokine-like_core"/>
</dbReference>
<dbReference type="InterPro" id="IPR010681">
    <property type="entry name" value="PRF/CT"/>
</dbReference>
<dbReference type="PANTHER" id="PTHR21353">
    <property type="match status" value="1"/>
</dbReference>
<dbReference type="PANTHER" id="PTHR21353:SF8">
    <property type="entry name" value="CARDIOTROPHIN-2"/>
    <property type="match status" value="1"/>
</dbReference>
<dbReference type="Pfam" id="PF06875">
    <property type="entry name" value="PRF"/>
    <property type="match status" value="1"/>
</dbReference>
<dbReference type="SUPFAM" id="SSF47266">
    <property type="entry name" value="4-helical cytokines"/>
    <property type="match status" value="1"/>
</dbReference>
<gene>
    <name type="primary">CTF2</name>
</gene>
<evidence type="ECO:0000250" key="1"/>
<evidence type="ECO:0000255" key="2"/>
<evidence type="ECO:0000305" key="3"/>
<feature type="signal peptide" evidence="2">
    <location>
        <begin position="1"/>
        <end position="21"/>
    </location>
</feature>
<feature type="chain" id="PRO_0000015615" description="Cardiotrophin-2">
    <location>
        <begin position="22"/>
        <end position="203"/>
    </location>
</feature>
<feature type="glycosylation site" description="N-linked (GlcNAc...) asparagine" evidence="2">
    <location>
        <position position="43"/>
    </location>
</feature>
<keyword id="KW-0202">Cytokine</keyword>
<keyword id="KW-0217">Developmental protein</keyword>
<keyword id="KW-0325">Glycoprotein</keyword>
<keyword id="KW-1185">Reference proteome</keyword>
<keyword id="KW-0964">Secreted</keyword>
<keyword id="KW-0732">Signal</keyword>
<sequence>MSCSLARLCLLTLLSPPLSSAASISPAEPISQAYSLALYMQKNTSALLRTYLQYQGSPLSDPGFSAPELQLSSLPPATAFFKTWHALDDGEWLSLAQRAFLALTQHLQLVEDDQSDLNPGSPILLAQLGAARLRAQGLLGNMAAITTALGLPIPPEEDTLGLAAFGASAFERKCRGYVVTREYGHWTDRAVRDLALLKAKYSA</sequence>
<reference key="1">
    <citation type="journal article" date="2004" name="Proc. Natl. Acad. Sci. U.S.A.">
        <title>Neuropoietin, a new IL-6-related cytokine signaling through the ciliary neurotrophic factor receptor.</title>
        <authorList>
            <person name="Derouet D."/>
            <person name="Rousseau F."/>
            <person name="Alfonsi F."/>
            <person name="Froger J."/>
            <person name="Hermann J."/>
            <person name="Barbier F."/>
            <person name="Perret D."/>
            <person name="Diveu C."/>
            <person name="Guillet C."/>
            <person name="Preisser L."/>
            <person name="Dumont A."/>
            <person name="Barbado M."/>
            <person name="Morel A."/>
            <person name="DeLapeyriere O."/>
            <person name="Gascan H."/>
            <person name="Chevalier S."/>
        </authorList>
    </citation>
    <scope>NUCLEOTIDE SEQUENCE [GENOMIC DNA]</scope>
</reference>
<comment type="function">
    <text>May have an important role in neuronal precursor development and maturation.</text>
</comment>
<comment type="subcellular location">
    <subcellularLocation>
        <location evidence="1">Secreted</location>
    </subcellularLocation>
</comment>
<comment type="similarity">
    <text evidence="3">Belongs to the IL-6 superfamily.</text>
</comment>
<organism>
    <name type="scientific">Pan troglodytes</name>
    <name type="common">Chimpanzee</name>
    <dbReference type="NCBI Taxonomy" id="9598"/>
    <lineage>
        <taxon>Eukaryota</taxon>
        <taxon>Metazoa</taxon>
        <taxon>Chordata</taxon>
        <taxon>Craniata</taxon>
        <taxon>Vertebrata</taxon>
        <taxon>Euteleostomi</taxon>
        <taxon>Mammalia</taxon>
        <taxon>Eutheria</taxon>
        <taxon>Euarchontoglires</taxon>
        <taxon>Primates</taxon>
        <taxon>Haplorrhini</taxon>
        <taxon>Catarrhini</taxon>
        <taxon>Hominidae</taxon>
        <taxon>Pan</taxon>
    </lineage>
</organism>
<name>CTF2_PANTR</name>
<protein>
    <recommendedName>
        <fullName>Cardiotrophin-2</fullName>
        <shortName>CT-2</shortName>
    </recommendedName>
    <alternativeName>
        <fullName>Neuropoietin</fullName>
        <shortName>Np</shortName>
    </alternativeName>
</protein>
<proteinExistence type="inferred from homology"/>